<comment type="function">
    <text evidence="1">Responsible for the low-affinity transport of potassium into the cell. Likely operates as a K(+):H(+) symporter.</text>
</comment>
<comment type="catalytic activity">
    <reaction evidence="1">
        <text>K(+)(in) + H(+)(in) = K(+)(out) + H(+)(out)</text>
        <dbReference type="Rhea" id="RHEA:28490"/>
        <dbReference type="ChEBI" id="CHEBI:15378"/>
        <dbReference type="ChEBI" id="CHEBI:29103"/>
    </reaction>
    <physiologicalReaction direction="right-to-left" evidence="1">
        <dbReference type="Rhea" id="RHEA:28492"/>
    </physiologicalReaction>
</comment>
<comment type="subcellular location">
    <subcellularLocation>
        <location evidence="1">Cell inner membrane</location>
        <topology evidence="1">Multi-pass membrane protein</topology>
    </subcellularLocation>
</comment>
<comment type="similarity">
    <text evidence="1 2">Belongs to the HAK/KUP transporter (TC 2.A.72) family.</text>
</comment>
<gene>
    <name evidence="1" type="primary">kup</name>
    <name type="ordered locus">STY3898</name>
    <name type="ordered locus">t3639</name>
</gene>
<reference key="1">
    <citation type="journal article" date="2001" name="Nature">
        <title>Complete genome sequence of a multiple drug resistant Salmonella enterica serovar Typhi CT18.</title>
        <authorList>
            <person name="Parkhill J."/>
            <person name="Dougan G."/>
            <person name="James K.D."/>
            <person name="Thomson N.R."/>
            <person name="Pickard D."/>
            <person name="Wain J."/>
            <person name="Churcher C.M."/>
            <person name="Mungall K.L."/>
            <person name="Bentley S.D."/>
            <person name="Holden M.T.G."/>
            <person name="Sebaihia M."/>
            <person name="Baker S."/>
            <person name="Basham D."/>
            <person name="Brooks K."/>
            <person name="Chillingworth T."/>
            <person name="Connerton P."/>
            <person name="Cronin A."/>
            <person name="Davis P."/>
            <person name="Davies R.M."/>
            <person name="Dowd L."/>
            <person name="White N."/>
            <person name="Farrar J."/>
            <person name="Feltwell T."/>
            <person name="Hamlin N."/>
            <person name="Haque A."/>
            <person name="Hien T.T."/>
            <person name="Holroyd S."/>
            <person name="Jagels K."/>
            <person name="Krogh A."/>
            <person name="Larsen T.S."/>
            <person name="Leather S."/>
            <person name="Moule S."/>
            <person name="O'Gaora P."/>
            <person name="Parry C."/>
            <person name="Quail M.A."/>
            <person name="Rutherford K.M."/>
            <person name="Simmonds M."/>
            <person name="Skelton J."/>
            <person name="Stevens K."/>
            <person name="Whitehead S."/>
            <person name="Barrell B.G."/>
        </authorList>
    </citation>
    <scope>NUCLEOTIDE SEQUENCE [LARGE SCALE GENOMIC DNA]</scope>
    <source>
        <strain>CT18</strain>
    </source>
</reference>
<reference key="2">
    <citation type="journal article" date="2003" name="J. Bacteriol.">
        <title>Comparative genomics of Salmonella enterica serovar Typhi strains Ty2 and CT18.</title>
        <authorList>
            <person name="Deng W."/>
            <person name="Liou S.-R."/>
            <person name="Plunkett G. III"/>
            <person name="Mayhew G.F."/>
            <person name="Rose D.J."/>
            <person name="Burland V."/>
            <person name="Kodoyianni V."/>
            <person name="Schwartz D.C."/>
            <person name="Blattner F.R."/>
        </authorList>
    </citation>
    <scope>NUCLEOTIDE SEQUENCE [LARGE SCALE GENOMIC DNA]</scope>
    <source>
        <strain>ATCC 700931 / Ty2</strain>
    </source>
</reference>
<dbReference type="EMBL" id="AL513382">
    <property type="protein sequence ID" value="CAD03115.1"/>
    <property type="molecule type" value="Genomic_DNA"/>
</dbReference>
<dbReference type="EMBL" id="AE014613">
    <property type="protein sequence ID" value="AAO71136.1"/>
    <property type="molecule type" value="Genomic_DNA"/>
</dbReference>
<dbReference type="RefSeq" id="NP_458063.1">
    <property type="nucleotide sequence ID" value="NC_003198.1"/>
</dbReference>
<dbReference type="RefSeq" id="WP_000102337.1">
    <property type="nucleotide sequence ID" value="NZ_WSUR01000023.1"/>
</dbReference>
<dbReference type="STRING" id="220341.gene:17587758"/>
<dbReference type="KEGG" id="stt:t3639"/>
<dbReference type="KEGG" id="sty:STY3898"/>
<dbReference type="PATRIC" id="fig|220341.7.peg.3978"/>
<dbReference type="eggNOG" id="COG3158">
    <property type="taxonomic scope" value="Bacteria"/>
</dbReference>
<dbReference type="HOGENOM" id="CLU_008142_4_2_6"/>
<dbReference type="OMA" id="MLLLWKW"/>
<dbReference type="OrthoDB" id="9805577at2"/>
<dbReference type="Proteomes" id="UP000000541">
    <property type="component" value="Chromosome"/>
</dbReference>
<dbReference type="Proteomes" id="UP000002670">
    <property type="component" value="Chromosome"/>
</dbReference>
<dbReference type="GO" id="GO:0005886">
    <property type="term" value="C:plasma membrane"/>
    <property type="evidence" value="ECO:0007669"/>
    <property type="project" value="UniProtKB-SubCell"/>
</dbReference>
<dbReference type="GO" id="GO:0015079">
    <property type="term" value="F:potassium ion transmembrane transporter activity"/>
    <property type="evidence" value="ECO:0007669"/>
    <property type="project" value="UniProtKB-UniRule"/>
</dbReference>
<dbReference type="GO" id="GO:0015293">
    <property type="term" value="F:symporter activity"/>
    <property type="evidence" value="ECO:0007669"/>
    <property type="project" value="UniProtKB-UniRule"/>
</dbReference>
<dbReference type="HAMAP" id="MF_01522">
    <property type="entry name" value="Kup"/>
    <property type="match status" value="1"/>
</dbReference>
<dbReference type="InterPro" id="IPR003855">
    <property type="entry name" value="K+_transporter"/>
</dbReference>
<dbReference type="InterPro" id="IPR053952">
    <property type="entry name" value="K_trans_C"/>
</dbReference>
<dbReference type="InterPro" id="IPR053951">
    <property type="entry name" value="K_trans_N"/>
</dbReference>
<dbReference type="InterPro" id="IPR023051">
    <property type="entry name" value="Kup"/>
</dbReference>
<dbReference type="NCBIfam" id="TIGR00794">
    <property type="entry name" value="kup"/>
    <property type="match status" value="1"/>
</dbReference>
<dbReference type="NCBIfam" id="NF008015">
    <property type="entry name" value="PRK10745.1"/>
    <property type="match status" value="1"/>
</dbReference>
<dbReference type="PANTHER" id="PTHR30540:SF79">
    <property type="entry name" value="LOW AFFINITY POTASSIUM TRANSPORT SYSTEM PROTEIN KUP"/>
    <property type="match status" value="1"/>
</dbReference>
<dbReference type="PANTHER" id="PTHR30540">
    <property type="entry name" value="OSMOTIC STRESS POTASSIUM TRANSPORTER"/>
    <property type="match status" value="1"/>
</dbReference>
<dbReference type="Pfam" id="PF02705">
    <property type="entry name" value="K_trans"/>
    <property type="match status" value="1"/>
</dbReference>
<dbReference type="Pfam" id="PF22776">
    <property type="entry name" value="K_trans_C"/>
    <property type="match status" value="1"/>
</dbReference>
<protein>
    <recommendedName>
        <fullName evidence="1">Low affinity potassium transport system protein Kup</fullName>
    </recommendedName>
    <alternativeName>
        <fullName evidence="1">Kup system potassium uptake protein</fullName>
    </alternativeName>
</protein>
<accession>Q8Z2R2</accession>
<accession>Q7C6J3</accession>
<proteinExistence type="inferred from homology"/>
<sequence length="622" mass="69317">MSTDNKQSLPAITLAAIGVVYGDIGTSPLYTLRECLSGQFGFGVERDAVFGFLSLIFWLLIFVVSIKYLTFVMRADNAGEGGILTLMSLAGRNTSARTTSMLVIMGLIGGSFFYGEVVITPAISVMSAIEGLEIVAPQLDTWIVPLSIIVLTLLFMIQKHGTGMVGKLFAPIMLTWFLILAVLGLRSIIANPEVLHALNPVWAVRFFLEYKTVSFIALGAVVLSITGVEALYADMGHFGKFPIRLAWFTVVLPSLVLNYFGQGALLLKHPEAIKNPFFLLAPDWALIPLLILAALATVIASQAVISGVFSLTRQAVRLGYLSPMRIIHTSEMESGQIYIPFVNWLLYFAVVVVIVSFEHSSNLAAAYGIAVTGTMVLTSILSTTVARKNWHWNKYFVALILIAFLCVDIPLFSANLDKLLSGGWLPLSLGLIMFTIMTTWKSERFRLLRRMHEHGNSLEAMIASLEKSPPVRVPGTAVYMSRALSVIPFALLHNLKHNKVLHERVILLTLRTEDAPYVHNVRRVQIEQLSPTFWRVVASYGWRETLNVEEVFHRCGLEGLSCRMMETSFFMSHESLIVGKRPWYLRLRGKLYLLLQRNALRAPDQFEIPPNRVIELGTQVEI</sequence>
<feature type="chain" id="PRO_0000209056" description="Low affinity potassium transport system protein Kup">
    <location>
        <begin position="1"/>
        <end position="622"/>
    </location>
</feature>
<feature type="transmembrane region" description="Helical" evidence="1">
    <location>
        <begin position="9"/>
        <end position="29"/>
    </location>
</feature>
<feature type="transmembrane region" description="Helical" evidence="1">
    <location>
        <begin position="49"/>
        <end position="69"/>
    </location>
</feature>
<feature type="transmembrane region" description="Helical" evidence="1">
    <location>
        <begin position="103"/>
        <end position="123"/>
    </location>
</feature>
<feature type="transmembrane region" description="Helical" evidence="1">
    <location>
        <begin position="137"/>
        <end position="157"/>
    </location>
</feature>
<feature type="transmembrane region" description="Helical" evidence="1">
    <location>
        <begin position="165"/>
        <end position="185"/>
    </location>
</feature>
<feature type="transmembrane region" description="Helical" evidence="1">
    <location>
        <begin position="213"/>
        <end position="233"/>
    </location>
</feature>
<feature type="transmembrane region" description="Helical" evidence="1">
    <location>
        <begin position="247"/>
        <end position="267"/>
    </location>
</feature>
<feature type="transmembrane region" description="Helical" evidence="1">
    <location>
        <begin position="276"/>
        <end position="296"/>
    </location>
</feature>
<feature type="transmembrane region" description="Helical" evidence="1">
    <location>
        <begin position="337"/>
        <end position="357"/>
    </location>
</feature>
<feature type="transmembrane region" description="Helical" evidence="1">
    <location>
        <begin position="363"/>
        <end position="383"/>
    </location>
</feature>
<feature type="transmembrane region" description="Helical" evidence="1">
    <location>
        <begin position="396"/>
        <end position="416"/>
    </location>
</feature>
<feature type="transmembrane region" description="Helical" evidence="1">
    <location>
        <begin position="419"/>
        <end position="439"/>
    </location>
</feature>
<organism>
    <name type="scientific">Salmonella typhi</name>
    <dbReference type="NCBI Taxonomy" id="90370"/>
    <lineage>
        <taxon>Bacteria</taxon>
        <taxon>Pseudomonadati</taxon>
        <taxon>Pseudomonadota</taxon>
        <taxon>Gammaproteobacteria</taxon>
        <taxon>Enterobacterales</taxon>
        <taxon>Enterobacteriaceae</taxon>
        <taxon>Salmonella</taxon>
    </lineage>
</organism>
<name>KUP_SALTI</name>
<keyword id="KW-0997">Cell inner membrane</keyword>
<keyword id="KW-1003">Cell membrane</keyword>
<keyword id="KW-0406">Ion transport</keyword>
<keyword id="KW-0472">Membrane</keyword>
<keyword id="KW-0630">Potassium</keyword>
<keyword id="KW-0633">Potassium transport</keyword>
<keyword id="KW-0769">Symport</keyword>
<keyword id="KW-0812">Transmembrane</keyword>
<keyword id="KW-1133">Transmembrane helix</keyword>
<keyword id="KW-0813">Transport</keyword>
<evidence type="ECO:0000255" key="1">
    <source>
        <dbReference type="HAMAP-Rule" id="MF_01522"/>
    </source>
</evidence>
<evidence type="ECO:0000305" key="2"/>